<feature type="chain" id="PRO_1000191418" description="UDP-N-acetylenolpyruvoylglucosamine reductase">
    <location>
        <begin position="1"/>
        <end position="304"/>
    </location>
</feature>
<feature type="domain" description="FAD-binding PCMH-type" evidence="1">
    <location>
        <begin position="33"/>
        <end position="198"/>
    </location>
</feature>
<feature type="active site" evidence="1">
    <location>
        <position position="177"/>
    </location>
</feature>
<feature type="active site" description="Proton donor" evidence="1">
    <location>
        <position position="227"/>
    </location>
</feature>
<feature type="active site" evidence="1">
    <location>
        <position position="297"/>
    </location>
</feature>
<reference key="1">
    <citation type="submission" date="2005-09" db="EMBL/GenBank/DDBJ databases">
        <title>Complete genome sequence of Clostridium kluyveri and comparative genomics of Clostridia species.</title>
        <authorList>
            <person name="Inui M."/>
            <person name="Nonaka H."/>
            <person name="Shinoda Y."/>
            <person name="Ikenaga Y."/>
            <person name="Abe M."/>
            <person name="Naito K."/>
            <person name="Vertes A.A."/>
            <person name="Yukawa H."/>
        </authorList>
    </citation>
    <scope>NUCLEOTIDE SEQUENCE [LARGE SCALE GENOMIC DNA]</scope>
    <source>
        <strain>NBRC 12016</strain>
    </source>
</reference>
<gene>
    <name evidence="1" type="primary">murB</name>
    <name type="ordered locus">CKR_3144</name>
</gene>
<proteinExistence type="inferred from homology"/>
<name>MURB_CLOK1</name>
<protein>
    <recommendedName>
        <fullName evidence="1">UDP-N-acetylenolpyruvoylglucosamine reductase</fullName>
        <ecNumber evidence="1">1.3.1.98</ecNumber>
    </recommendedName>
    <alternativeName>
        <fullName evidence="1">UDP-N-acetylmuramate dehydrogenase</fullName>
    </alternativeName>
</protein>
<accession>B9DWV2</accession>
<comment type="function">
    <text evidence="1">Cell wall formation.</text>
</comment>
<comment type="catalytic activity">
    <reaction evidence="1">
        <text>UDP-N-acetyl-alpha-D-muramate + NADP(+) = UDP-N-acetyl-3-O-(1-carboxyvinyl)-alpha-D-glucosamine + NADPH + H(+)</text>
        <dbReference type="Rhea" id="RHEA:12248"/>
        <dbReference type="ChEBI" id="CHEBI:15378"/>
        <dbReference type="ChEBI" id="CHEBI:57783"/>
        <dbReference type="ChEBI" id="CHEBI:58349"/>
        <dbReference type="ChEBI" id="CHEBI:68483"/>
        <dbReference type="ChEBI" id="CHEBI:70757"/>
        <dbReference type="EC" id="1.3.1.98"/>
    </reaction>
</comment>
<comment type="cofactor">
    <cofactor evidence="1">
        <name>FAD</name>
        <dbReference type="ChEBI" id="CHEBI:57692"/>
    </cofactor>
</comment>
<comment type="pathway">
    <text evidence="1">Cell wall biogenesis; peptidoglycan biosynthesis.</text>
</comment>
<comment type="subcellular location">
    <subcellularLocation>
        <location evidence="1">Cytoplasm</location>
    </subcellularLocation>
</comment>
<comment type="similarity">
    <text evidence="1">Belongs to the MurB family.</text>
</comment>
<sequence>MNKFEDFAIKLREILDIEDIKIDEPMKEHTSFKVGGPVDILLTPKHFNQVVDVVKLCKKENIPYYIMGNGSNLLVKDGGIRGVMIKLVKLNKIQVKGNKIITESGVSLKDISTTALENCLTGFEFACGIPGSVGGAVTMNAGAYNGEISNVIESAKVICNSGEIIVLNREEMELGYRMSSILKNGYTILEVTFNLEKGNKENIMNRIEDLSRRRNEKQPLEYASAGSTFKRPQGHFAAKLIEDSGLKGESVGDAQVSEKHSGFIINKGNATAKDILTLISIVQDRVRQNFDIDLYTEVRIIGED</sequence>
<organism>
    <name type="scientific">Clostridium kluyveri (strain NBRC 12016)</name>
    <dbReference type="NCBI Taxonomy" id="583346"/>
    <lineage>
        <taxon>Bacteria</taxon>
        <taxon>Bacillati</taxon>
        <taxon>Bacillota</taxon>
        <taxon>Clostridia</taxon>
        <taxon>Eubacteriales</taxon>
        <taxon>Clostridiaceae</taxon>
        <taxon>Clostridium</taxon>
    </lineage>
</organism>
<keyword id="KW-0131">Cell cycle</keyword>
<keyword id="KW-0132">Cell division</keyword>
<keyword id="KW-0133">Cell shape</keyword>
<keyword id="KW-0961">Cell wall biogenesis/degradation</keyword>
<keyword id="KW-0963">Cytoplasm</keyword>
<keyword id="KW-0274">FAD</keyword>
<keyword id="KW-0285">Flavoprotein</keyword>
<keyword id="KW-0521">NADP</keyword>
<keyword id="KW-0560">Oxidoreductase</keyword>
<keyword id="KW-0573">Peptidoglycan synthesis</keyword>
<dbReference type="EC" id="1.3.1.98" evidence="1"/>
<dbReference type="EMBL" id="AP009049">
    <property type="protein sequence ID" value="BAH08195.1"/>
    <property type="molecule type" value="Genomic_DNA"/>
</dbReference>
<dbReference type="RefSeq" id="WP_012103888.1">
    <property type="nucleotide sequence ID" value="NC_011837.1"/>
</dbReference>
<dbReference type="SMR" id="B9DWV2"/>
<dbReference type="KEGG" id="ckr:CKR_3144"/>
<dbReference type="HOGENOM" id="CLU_035304_1_1_9"/>
<dbReference type="UniPathway" id="UPA00219"/>
<dbReference type="Proteomes" id="UP000007969">
    <property type="component" value="Chromosome"/>
</dbReference>
<dbReference type="GO" id="GO:0005829">
    <property type="term" value="C:cytosol"/>
    <property type="evidence" value="ECO:0007669"/>
    <property type="project" value="TreeGrafter"/>
</dbReference>
<dbReference type="GO" id="GO:0071949">
    <property type="term" value="F:FAD binding"/>
    <property type="evidence" value="ECO:0007669"/>
    <property type="project" value="InterPro"/>
</dbReference>
<dbReference type="GO" id="GO:0008762">
    <property type="term" value="F:UDP-N-acetylmuramate dehydrogenase activity"/>
    <property type="evidence" value="ECO:0007669"/>
    <property type="project" value="UniProtKB-UniRule"/>
</dbReference>
<dbReference type="GO" id="GO:0051301">
    <property type="term" value="P:cell division"/>
    <property type="evidence" value="ECO:0007669"/>
    <property type="project" value="UniProtKB-KW"/>
</dbReference>
<dbReference type="GO" id="GO:0071555">
    <property type="term" value="P:cell wall organization"/>
    <property type="evidence" value="ECO:0007669"/>
    <property type="project" value="UniProtKB-KW"/>
</dbReference>
<dbReference type="GO" id="GO:0009252">
    <property type="term" value="P:peptidoglycan biosynthetic process"/>
    <property type="evidence" value="ECO:0007669"/>
    <property type="project" value="UniProtKB-UniRule"/>
</dbReference>
<dbReference type="GO" id="GO:0008360">
    <property type="term" value="P:regulation of cell shape"/>
    <property type="evidence" value="ECO:0007669"/>
    <property type="project" value="UniProtKB-KW"/>
</dbReference>
<dbReference type="Gene3D" id="3.30.465.10">
    <property type="match status" value="1"/>
</dbReference>
<dbReference type="Gene3D" id="3.90.78.10">
    <property type="entry name" value="UDP-N-acetylenolpyruvoylglucosamine reductase, C-terminal domain"/>
    <property type="match status" value="1"/>
</dbReference>
<dbReference type="Gene3D" id="3.30.43.10">
    <property type="entry name" value="Uridine Diphospho-n-acetylenolpyruvylglucosamine Reductase, domain 2"/>
    <property type="match status" value="1"/>
</dbReference>
<dbReference type="HAMAP" id="MF_00037">
    <property type="entry name" value="MurB"/>
    <property type="match status" value="1"/>
</dbReference>
<dbReference type="InterPro" id="IPR016166">
    <property type="entry name" value="FAD-bd_PCMH"/>
</dbReference>
<dbReference type="InterPro" id="IPR036318">
    <property type="entry name" value="FAD-bd_PCMH-like_sf"/>
</dbReference>
<dbReference type="InterPro" id="IPR016167">
    <property type="entry name" value="FAD-bd_PCMH_sub1"/>
</dbReference>
<dbReference type="InterPro" id="IPR016169">
    <property type="entry name" value="FAD-bd_PCMH_sub2"/>
</dbReference>
<dbReference type="InterPro" id="IPR003170">
    <property type="entry name" value="MurB"/>
</dbReference>
<dbReference type="InterPro" id="IPR011601">
    <property type="entry name" value="MurB_C"/>
</dbReference>
<dbReference type="InterPro" id="IPR036635">
    <property type="entry name" value="MurB_C_sf"/>
</dbReference>
<dbReference type="InterPro" id="IPR006094">
    <property type="entry name" value="Oxid_FAD_bind_N"/>
</dbReference>
<dbReference type="NCBIfam" id="TIGR00179">
    <property type="entry name" value="murB"/>
    <property type="match status" value="1"/>
</dbReference>
<dbReference type="NCBIfam" id="NF010480">
    <property type="entry name" value="PRK13905.1"/>
    <property type="match status" value="1"/>
</dbReference>
<dbReference type="PANTHER" id="PTHR21071">
    <property type="entry name" value="UDP-N-ACETYLENOLPYRUVOYLGLUCOSAMINE REDUCTASE"/>
    <property type="match status" value="1"/>
</dbReference>
<dbReference type="PANTHER" id="PTHR21071:SF4">
    <property type="entry name" value="UDP-N-ACETYLENOLPYRUVOYLGLUCOSAMINE REDUCTASE"/>
    <property type="match status" value="1"/>
</dbReference>
<dbReference type="Pfam" id="PF01565">
    <property type="entry name" value="FAD_binding_4"/>
    <property type="match status" value="1"/>
</dbReference>
<dbReference type="Pfam" id="PF02873">
    <property type="entry name" value="MurB_C"/>
    <property type="match status" value="1"/>
</dbReference>
<dbReference type="SUPFAM" id="SSF56176">
    <property type="entry name" value="FAD-binding/transporter-associated domain-like"/>
    <property type="match status" value="1"/>
</dbReference>
<dbReference type="SUPFAM" id="SSF56194">
    <property type="entry name" value="Uridine diphospho-N-Acetylenolpyruvylglucosamine reductase, MurB, C-terminal domain"/>
    <property type="match status" value="1"/>
</dbReference>
<dbReference type="PROSITE" id="PS51387">
    <property type="entry name" value="FAD_PCMH"/>
    <property type="match status" value="1"/>
</dbReference>
<evidence type="ECO:0000255" key="1">
    <source>
        <dbReference type="HAMAP-Rule" id="MF_00037"/>
    </source>
</evidence>